<organism>
    <name type="scientific">Mycobacterium sp. (strain KMS)</name>
    <dbReference type="NCBI Taxonomy" id="189918"/>
    <lineage>
        <taxon>Bacteria</taxon>
        <taxon>Bacillati</taxon>
        <taxon>Actinomycetota</taxon>
        <taxon>Actinomycetes</taxon>
        <taxon>Mycobacteriales</taxon>
        <taxon>Mycobacteriaceae</taxon>
        <taxon>Mycobacterium</taxon>
    </lineage>
</organism>
<gene>
    <name evidence="1" type="primary">trpC</name>
    <name type="ordered locus">Mkms_3110</name>
</gene>
<name>TRPC_MYCSK</name>
<comment type="catalytic activity">
    <reaction evidence="1">
        <text>1-(2-carboxyphenylamino)-1-deoxy-D-ribulose 5-phosphate + H(+) = (1S,2R)-1-C-(indol-3-yl)glycerol 3-phosphate + CO2 + H2O</text>
        <dbReference type="Rhea" id="RHEA:23476"/>
        <dbReference type="ChEBI" id="CHEBI:15377"/>
        <dbReference type="ChEBI" id="CHEBI:15378"/>
        <dbReference type="ChEBI" id="CHEBI:16526"/>
        <dbReference type="ChEBI" id="CHEBI:58613"/>
        <dbReference type="ChEBI" id="CHEBI:58866"/>
        <dbReference type="EC" id="4.1.1.48"/>
    </reaction>
</comment>
<comment type="pathway">
    <text evidence="1">Amino-acid biosynthesis; L-tryptophan biosynthesis; L-tryptophan from chorismate: step 4/5.</text>
</comment>
<comment type="similarity">
    <text evidence="1">Belongs to the TrpC family.</text>
</comment>
<accession>A1UHJ6</accession>
<proteinExistence type="inferred from homology"/>
<dbReference type="EC" id="4.1.1.48" evidence="1"/>
<dbReference type="EMBL" id="CP000518">
    <property type="protein sequence ID" value="ABL92304.1"/>
    <property type="molecule type" value="Genomic_DNA"/>
</dbReference>
<dbReference type="SMR" id="A1UHJ6"/>
<dbReference type="STRING" id="189918.Mkms_3110"/>
<dbReference type="KEGG" id="mkm:Mkms_3110"/>
<dbReference type="HOGENOM" id="CLU_034247_0_0_11"/>
<dbReference type="OrthoDB" id="9804217at2"/>
<dbReference type="UniPathway" id="UPA00035">
    <property type="reaction ID" value="UER00043"/>
</dbReference>
<dbReference type="GO" id="GO:0004425">
    <property type="term" value="F:indole-3-glycerol-phosphate synthase activity"/>
    <property type="evidence" value="ECO:0007669"/>
    <property type="project" value="UniProtKB-UniRule"/>
</dbReference>
<dbReference type="GO" id="GO:0004640">
    <property type="term" value="F:phosphoribosylanthranilate isomerase activity"/>
    <property type="evidence" value="ECO:0007669"/>
    <property type="project" value="TreeGrafter"/>
</dbReference>
<dbReference type="GO" id="GO:0000162">
    <property type="term" value="P:L-tryptophan biosynthetic process"/>
    <property type="evidence" value="ECO:0007669"/>
    <property type="project" value="UniProtKB-UniRule"/>
</dbReference>
<dbReference type="CDD" id="cd00331">
    <property type="entry name" value="IGPS"/>
    <property type="match status" value="1"/>
</dbReference>
<dbReference type="FunFam" id="3.20.20.70:FF:000024">
    <property type="entry name" value="Indole-3-glycerol phosphate synthase"/>
    <property type="match status" value="1"/>
</dbReference>
<dbReference type="Gene3D" id="3.20.20.70">
    <property type="entry name" value="Aldolase class I"/>
    <property type="match status" value="1"/>
</dbReference>
<dbReference type="HAMAP" id="MF_00134_A">
    <property type="entry name" value="IGPS_A"/>
    <property type="match status" value="1"/>
</dbReference>
<dbReference type="HAMAP" id="MF_00134_B">
    <property type="entry name" value="IGPS_B"/>
    <property type="match status" value="1"/>
</dbReference>
<dbReference type="InterPro" id="IPR013785">
    <property type="entry name" value="Aldolase_TIM"/>
</dbReference>
<dbReference type="InterPro" id="IPR045186">
    <property type="entry name" value="Indole-3-glycerol_P_synth"/>
</dbReference>
<dbReference type="InterPro" id="IPR013798">
    <property type="entry name" value="Indole-3-glycerol_P_synth_dom"/>
</dbReference>
<dbReference type="InterPro" id="IPR001468">
    <property type="entry name" value="Indole-3-GlycerolPSynthase_CS"/>
</dbReference>
<dbReference type="InterPro" id="IPR011060">
    <property type="entry name" value="RibuloseP-bd_barrel"/>
</dbReference>
<dbReference type="NCBIfam" id="NF001369">
    <property type="entry name" value="PRK00278.1-1"/>
    <property type="match status" value="1"/>
</dbReference>
<dbReference type="NCBIfam" id="NF001377">
    <property type="entry name" value="PRK00278.2-4"/>
    <property type="match status" value="1"/>
</dbReference>
<dbReference type="PANTHER" id="PTHR22854:SF2">
    <property type="entry name" value="INDOLE-3-GLYCEROL-PHOSPHATE SYNTHASE"/>
    <property type="match status" value="1"/>
</dbReference>
<dbReference type="PANTHER" id="PTHR22854">
    <property type="entry name" value="TRYPTOPHAN BIOSYNTHESIS PROTEIN"/>
    <property type="match status" value="1"/>
</dbReference>
<dbReference type="Pfam" id="PF00218">
    <property type="entry name" value="IGPS"/>
    <property type="match status" value="1"/>
</dbReference>
<dbReference type="SUPFAM" id="SSF51366">
    <property type="entry name" value="Ribulose-phoshate binding barrel"/>
    <property type="match status" value="1"/>
</dbReference>
<dbReference type="PROSITE" id="PS00614">
    <property type="entry name" value="IGPS"/>
    <property type="match status" value="1"/>
</dbReference>
<keyword id="KW-0028">Amino-acid biosynthesis</keyword>
<keyword id="KW-0057">Aromatic amino acid biosynthesis</keyword>
<keyword id="KW-0210">Decarboxylase</keyword>
<keyword id="KW-0456">Lyase</keyword>
<keyword id="KW-0822">Tryptophan biosynthesis</keyword>
<feature type="chain" id="PRO_1000018503" description="Indole-3-glycerol phosphate synthase">
    <location>
        <begin position="1"/>
        <end position="272"/>
    </location>
</feature>
<protein>
    <recommendedName>
        <fullName evidence="1">Indole-3-glycerol phosphate synthase</fullName>
        <shortName evidence="1">IGPS</shortName>
        <ecNumber evidence="1">4.1.1.48</ecNumber>
    </recommendedName>
</protein>
<reference key="1">
    <citation type="submission" date="2006-12" db="EMBL/GenBank/DDBJ databases">
        <title>Complete sequence of chromosome of Mycobacterium sp. KMS.</title>
        <authorList>
            <consortium name="US DOE Joint Genome Institute"/>
            <person name="Copeland A."/>
            <person name="Lucas S."/>
            <person name="Lapidus A."/>
            <person name="Barry K."/>
            <person name="Detter J.C."/>
            <person name="Glavina del Rio T."/>
            <person name="Hammon N."/>
            <person name="Israni S."/>
            <person name="Dalin E."/>
            <person name="Tice H."/>
            <person name="Pitluck S."/>
            <person name="Kiss H."/>
            <person name="Brettin T."/>
            <person name="Bruce D."/>
            <person name="Han C."/>
            <person name="Tapia R."/>
            <person name="Gilna P."/>
            <person name="Schmutz J."/>
            <person name="Larimer F."/>
            <person name="Land M."/>
            <person name="Hauser L."/>
            <person name="Kyrpides N."/>
            <person name="Mikhailova N."/>
            <person name="Miller C.D."/>
            <person name="Richardson P."/>
        </authorList>
    </citation>
    <scope>NUCLEOTIDE SEQUENCE [LARGE SCALE GENOMIC DNA]</scope>
    <source>
        <strain>KMS</strain>
    </source>
</reference>
<evidence type="ECO:0000255" key="1">
    <source>
        <dbReference type="HAMAP-Rule" id="MF_00134"/>
    </source>
</evidence>
<sequence length="272" mass="28666">MSSATVLDSIIEGVRADVAAREAVVSLTEIKERAQRAKPPLDVMAALREPGIGVIAEVKRASPSRGALAQIGDPADLARAYQDGGARVISVLTEQRRFNGSLDDLDAVRAAVSIPVLRKDFIVRPYQIHEARAHGADMLLLIVAALEQPVLESLLERTESLGMTALVEVHTEAEADRALQAGARVIGVNARNLKTLEVDRDCFARIAPGLPSNVIRIAESGVRGPADLLAYAGAGADAVLVGEGLVTSRDPRSAVADLVTAGTHPSCPKPSR</sequence>